<protein>
    <recommendedName>
        <fullName>Folic acid synthesis protein fol1</fullName>
    </recommendedName>
    <domain>
        <recommendedName>
            <fullName>Dihydroneopterin aldolase</fullName>
            <shortName>DHNA</shortName>
            <ecNumber>4.1.2.25</ecNumber>
        </recommendedName>
        <alternativeName>
            <fullName>7,8-dihydroneopterin aldolase</fullName>
        </alternativeName>
        <alternativeName>
            <fullName>FASA</fullName>
        </alternativeName>
        <alternativeName>
            <fullName>FASB</fullName>
        </alternativeName>
    </domain>
    <domain>
        <recommendedName>
            <fullName>6-hydroxymethyl-7,8-dihydropterin pyrophosphokinase</fullName>
            <shortName>HPPK</shortName>
            <ecNumber>2.7.6.3</ecNumber>
        </recommendedName>
        <alternativeName>
            <fullName>2-amino-4-hydroxy-6-hydroxymethyldihydropteridine pyrophosphokinase</fullName>
        </alternativeName>
        <alternativeName>
            <fullName>7,8-dihydro-6-hydroxymethylpterin-pyrophosphokinase</fullName>
            <shortName>PPPK</shortName>
        </alternativeName>
        <alternativeName>
            <fullName>FASC</fullName>
        </alternativeName>
    </domain>
    <domain>
        <recommendedName>
            <fullName>Dihydropteroate synthase</fullName>
            <shortName>DHPS</shortName>
            <ecNumber>2.5.1.15</ecNumber>
        </recommendedName>
        <alternativeName>
            <fullName>Dihydropteroate pyrophosphorylase</fullName>
        </alternativeName>
        <alternativeName>
            <fullName>FASD</fullName>
        </alternativeName>
    </domain>
</protein>
<sequence>MKSLVNLWGIYPFIRNNSLHGFAKIPRIVSTIPRQLRFSSLRHPTRQMDLIHDTVVVENLNTFAVVGQDQWKRKEPQPVQIDVYMRNNVQLAGEKDELKSTIHYGIASKLLRKEIEGSFFTTPKDLVNKIASLCFEDVIDTSHVSIKLTLPKCVLRSKNGLHYYAERERNSTSNFVDRIEFSDLELATILGIHAFERQEKQRVCLNISFANTEVEALEIARAIAEYVEQSAFLTIEALVVNLSKYLCFTKNLDDISIKAEKPSAITFANASAVQIYRTRSYFLQESLHKYESTKNKIAYLSFGSNIGDKFEQIQTALSMLHKIEGIRVLDVSPLYETEPMYYKDQPSFLNGVCKIETRMSPINLLRACQSIEQEMGRIKTILKGPRCIDLDIVLYEDCVYESEVLTIPHLGLQEREFVLRPLLALSPDLVHPYTHQPLQEALDKLPSQGIRLYSSFDNKKIINGALTMGILNVTPDSFSDGGKVSQNNILEKAKSMVGDGASILDIGGQSTKPGADPVSVEEELRRVIPMISLLRSSGITVPISIDTYYSKVAKLAIEAGANIINDVTGGMGDEKMLPLAASLQVPICIMHMRGTPETMKALSIYEKDIVEEVAVELSSRVEAAVQSGVHRYNIILDPGFGFAKTPKQSAGLLGRLHELMKKPQFKDMHWLSGPSRKGFTGYFTGDASPKDRIWGTSACVTASVLQGVSIVRVHDTKEMSKVVGMANAIRYVP</sequence>
<accession>Q4LB35</accession>
<name>FOL1_SCHPO</name>
<organism>
    <name type="scientific">Schizosaccharomyces pombe (strain 972 / ATCC 24843)</name>
    <name type="common">Fission yeast</name>
    <dbReference type="NCBI Taxonomy" id="284812"/>
    <lineage>
        <taxon>Eukaryota</taxon>
        <taxon>Fungi</taxon>
        <taxon>Dikarya</taxon>
        <taxon>Ascomycota</taxon>
        <taxon>Taphrinomycotina</taxon>
        <taxon>Schizosaccharomycetes</taxon>
        <taxon>Schizosaccharomycetales</taxon>
        <taxon>Schizosaccharomycetaceae</taxon>
        <taxon>Schizosaccharomyces</taxon>
    </lineage>
</organism>
<reference key="1">
    <citation type="journal article" date="2002" name="Nature">
        <title>The genome sequence of Schizosaccharomyces pombe.</title>
        <authorList>
            <person name="Wood V."/>
            <person name="Gwilliam R."/>
            <person name="Rajandream M.A."/>
            <person name="Lyne M.H."/>
            <person name="Lyne R."/>
            <person name="Stewart A."/>
            <person name="Sgouros J.G."/>
            <person name="Peat N."/>
            <person name="Hayles J."/>
            <person name="Baker S.G."/>
            <person name="Basham D."/>
            <person name="Bowman S."/>
            <person name="Brooks K."/>
            <person name="Brown D."/>
            <person name="Brown S."/>
            <person name="Chillingworth T."/>
            <person name="Churcher C.M."/>
            <person name="Collins M."/>
            <person name="Connor R."/>
            <person name="Cronin A."/>
            <person name="Davis P."/>
            <person name="Feltwell T."/>
            <person name="Fraser A."/>
            <person name="Gentles S."/>
            <person name="Goble A."/>
            <person name="Hamlin N."/>
            <person name="Harris D.E."/>
            <person name="Hidalgo J."/>
            <person name="Hodgson G."/>
            <person name="Holroyd S."/>
            <person name="Hornsby T."/>
            <person name="Howarth S."/>
            <person name="Huckle E.J."/>
            <person name="Hunt S."/>
            <person name="Jagels K."/>
            <person name="James K.D."/>
            <person name="Jones L."/>
            <person name="Jones M."/>
            <person name="Leather S."/>
            <person name="McDonald S."/>
            <person name="McLean J."/>
            <person name="Mooney P."/>
            <person name="Moule S."/>
            <person name="Mungall K.L."/>
            <person name="Murphy L.D."/>
            <person name="Niblett D."/>
            <person name="Odell C."/>
            <person name="Oliver K."/>
            <person name="O'Neil S."/>
            <person name="Pearson D."/>
            <person name="Quail M.A."/>
            <person name="Rabbinowitsch E."/>
            <person name="Rutherford K.M."/>
            <person name="Rutter S."/>
            <person name="Saunders D."/>
            <person name="Seeger K."/>
            <person name="Sharp S."/>
            <person name="Skelton J."/>
            <person name="Simmonds M.N."/>
            <person name="Squares R."/>
            <person name="Squares S."/>
            <person name="Stevens K."/>
            <person name="Taylor K."/>
            <person name="Taylor R.G."/>
            <person name="Tivey A."/>
            <person name="Walsh S.V."/>
            <person name="Warren T."/>
            <person name="Whitehead S."/>
            <person name="Woodward J.R."/>
            <person name="Volckaert G."/>
            <person name="Aert R."/>
            <person name="Robben J."/>
            <person name="Grymonprez B."/>
            <person name="Weltjens I."/>
            <person name="Vanstreels E."/>
            <person name="Rieger M."/>
            <person name="Schaefer M."/>
            <person name="Mueller-Auer S."/>
            <person name="Gabel C."/>
            <person name="Fuchs M."/>
            <person name="Duesterhoeft A."/>
            <person name="Fritzc C."/>
            <person name="Holzer E."/>
            <person name="Moestl D."/>
            <person name="Hilbert H."/>
            <person name="Borzym K."/>
            <person name="Langer I."/>
            <person name="Beck A."/>
            <person name="Lehrach H."/>
            <person name="Reinhardt R."/>
            <person name="Pohl T.M."/>
            <person name="Eger P."/>
            <person name="Zimmermann W."/>
            <person name="Wedler H."/>
            <person name="Wambutt R."/>
            <person name="Purnelle B."/>
            <person name="Goffeau A."/>
            <person name="Cadieu E."/>
            <person name="Dreano S."/>
            <person name="Gloux S."/>
            <person name="Lelaure V."/>
            <person name="Mottier S."/>
            <person name="Galibert F."/>
            <person name="Aves S.J."/>
            <person name="Xiang Z."/>
            <person name="Hunt C."/>
            <person name="Moore K."/>
            <person name="Hurst S.M."/>
            <person name="Lucas M."/>
            <person name="Rochet M."/>
            <person name="Gaillardin C."/>
            <person name="Tallada V.A."/>
            <person name="Garzon A."/>
            <person name="Thode G."/>
            <person name="Daga R.R."/>
            <person name="Cruzado L."/>
            <person name="Jimenez J."/>
            <person name="Sanchez M."/>
            <person name="del Rey F."/>
            <person name="Benito J."/>
            <person name="Dominguez A."/>
            <person name="Revuelta J.L."/>
            <person name="Moreno S."/>
            <person name="Armstrong J."/>
            <person name="Forsburg S.L."/>
            <person name="Cerutti L."/>
            <person name="Lowe T."/>
            <person name="McCombie W.R."/>
            <person name="Paulsen I."/>
            <person name="Potashkin J."/>
            <person name="Shpakovski G.V."/>
            <person name="Ussery D."/>
            <person name="Barrell B.G."/>
            <person name="Nurse P."/>
        </authorList>
    </citation>
    <scope>NUCLEOTIDE SEQUENCE [LARGE SCALE GENOMIC DNA]</scope>
    <source>
        <strain>972 / ATCC 24843</strain>
    </source>
</reference>
<reference key="2">
    <citation type="journal article" date="2011" name="Science">
        <title>Comparative functional genomics of the fission yeasts.</title>
        <authorList>
            <person name="Rhind N."/>
            <person name="Chen Z."/>
            <person name="Yassour M."/>
            <person name="Thompson D.A."/>
            <person name="Haas B.J."/>
            <person name="Habib N."/>
            <person name="Wapinski I."/>
            <person name="Roy S."/>
            <person name="Lin M.F."/>
            <person name="Heiman D.I."/>
            <person name="Young S.K."/>
            <person name="Furuya K."/>
            <person name="Guo Y."/>
            <person name="Pidoux A."/>
            <person name="Chen H.M."/>
            <person name="Robbertse B."/>
            <person name="Goldberg J.M."/>
            <person name="Aoki K."/>
            <person name="Bayne E.H."/>
            <person name="Berlin A.M."/>
            <person name="Desjardins C.A."/>
            <person name="Dobbs E."/>
            <person name="Dukaj L."/>
            <person name="Fan L."/>
            <person name="FitzGerald M.G."/>
            <person name="French C."/>
            <person name="Gujja S."/>
            <person name="Hansen K."/>
            <person name="Keifenheim D."/>
            <person name="Levin J.Z."/>
            <person name="Mosher R.A."/>
            <person name="Mueller C.A."/>
            <person name="Pfiffner J."/>
            <person name="Priest M."/>
            <person name="Russ C."/>
            <person name="Smialowska A."/>
            <person name="Swoboda P."/>
            <person name="Sykes S.M."/>
            <person name="Vaughn M."/>
            <person name="Vengrova S."/>
            <person name="Yoder R."/>
            <person name="Zeng Q."/>
            <person name="Allshire R."/>
            <person name="Baulcombe D."/>
            <person name="Birren B.W."/>
            <person name="Brown W."/>
            <person name="Ekwall K."/>
            <person name="Kellis M."/>
            <person name="Leatherwood J."/>
            <person name="Levin H."/>
            <person name="Margalit H."/>
            <person name="Martienssen R."/>
            <person name="Nieduszynski C.A."/>
            <person name="Spatafora J.W."/>
            <person name="Friedman N."/>
            <person name="Dalgaard J.Z."/>
            <person name="Baumann P."/>
            <person name="Niki H."/>
            <person name="Regev A."/>
            <person name="Nusbaum C."/>
        </authorList>
    </citation>
    <scope>REVISION OF GENE MODEL</scope>
</reference>
<reference key="3">
    <citation type="journal article" date="2006" name="Nat. Biotechnol.">
        <title>ORFeome cloning and global analysis of protein localization in the fission yeast Schizosaccharomyces pombe.</title>
        <authorList>
            <person name="Matsuyama A."/>
            <person name="Arai R."/>
            <person name="Yashiroda Y."/>
            <person name="Shirai A."/>
            <person name="Kamata A."/>
            <person name="Sekido S."/>
            <person name="Kobayashi Y."/>
            <person name="Hashimoto A."/>
            <person name="Hamamoto M."/>
            <person name="Hiraoka Y."/>
            <person name="Horinouchi S."/>
            <person name="Yoshida M."/>
        </authorList>
    </citation>
    <scope>SUBCELLULAR LOCATION [LARGE SCALE ANALYSIS]</scope>
</reference>
<reference key="4">
    <citation type="journal article" date="2008" name="J. Proteome Res.">
        <title>Phosphoproteome analysis of fission yeast.</title>
        <authorList>
            <person name="Wilson-Grady J.T."/>
            <person name="Villen J."/>
            <person name="Gygi S.P."/>
        </authorList>
    </citation>
    <scope>PHOSPHORYLATION [LARGE SCALE ANALYSIS] AT TYR-281</scope>
    <scope>IDENTIFICATION BY MASS SPECTROMETRY</scope>
</reference>
<comment type="function">
    <text evidence="2">Catalyzes three sequential steps of tetrahydrofolate biosynthesis.</text>
</comment>
<comment type="catalytic activity">
    <reaction evidence="2">
        <text>7,8-dihydroneopterin = 6-hydroxymethyl-7,8-dihydropterin + glycolaldehyde</text>
        <dbReference type="Rhea" id="RHEA:10540"/>
        <dbReference type="ChEBI" id="CHEBI:17001"/>
        <dbReference type="ChEBI" id="CHEBI:17071"/>
        <dbReference type="ChEBI" id="CHEBI:44841"/>
        <dbReference type="EC" id="4.1.2.25"/>
    </reaction>
</comment>
<comment type="catalytic activity">
    <reaction evidence="2">
        <text>6-hydroxymethyl-7,8-dihydropterin + ATP = (7,8-dihydropterin-6-yl)methyl diphosphate + AMP + H(+)</text>
        <dbReference type="Rhea" id="RHEA:11412"/>
        <dbReference type="ChEBI" id="CHEBI:15378"/>
        <dbReference type="ChEBI" id="CHEBI:30616"/>
        <dbReference type="ChEBI" id="CHEBI:44841"/>
        <dbReference type="ChEBI" id="CHEBI:72950"/>
        <dbReference type="ChEBI" id="CHEBI:456215"/>
        <dbReference type="EC" id="2.7.6.3"/>
    </reaction>
</comment>
<comment type="catalytic activity">
    <reaction evidence="2">
        <text>(7,8-dihydropterin-6-yl)methyl diphosphate + 4-aminobenzoate = 7,8-dihydropteroate + diphosphate</text>
        <dbReference type="Rhea" id="RHEA:19949"/>
        <dbReference type="ChEBI" id="CHEBI:17836"/>
        <dbReference type="ChEBI" id="CHEBI:17839"/>
        <dbReference type="ChEBI" id="CHEBI:33019"/>
        <dbReference type="ChEBI" id="CHEBI:72950"/>
        <dbReference type="EC" id="2.5.1.15"/>
    </reaction>
</comment>
<comment type="cofactor">
    <cofactor evidence="1">
        <name>Mg(2+)</name>
        <dbReference type="ChEBI" id="CHEBI:18420"/>
    </cofactor>
</comment>
<comment type="pathway">
    <text>Cofactor biosynthesis; tetrahydrofolate biosynthesis; 2-amino-4-hydroxy-6-hydroxymethyl-7,8-dihydropteridine diphosphate from 7,8-dihydroneopterin triphosphate: step 3/4.</text>
</comment>
<comment type="pathway">
    <text>Cofactor biosynthesis; tetrahydrofolate biosynthesis; 2-amino-4-hydroxy-6-hydroxymethyl-7,8-dihydropteridine diphosphate from 7,8-dihydroneopterin triphosphate: step 4/4.</text>
</comment>
<comment type="pathway">
    <text>Cofactor biosynthesis; tetrahydrofolate biosynthesis; 7,8-dihydrofolate from 2-amino-4-hydroxy-6-hydroxymethyl-7,8-dihydropteridine diphosphate and 4-aminobenzoate: step 1/2.</text>
</comment>
<comment type="subcellular location">
    <subcellularLocation>
        <location evidence="5">Cytoplasm</location>
    </subcellularLocation>
</comment>
<comment type="similarity">
    <text evidence="7">In the N-terminal section; belongs to the DHNA family.</text>
</comment>
<comment type="similarity">
    <text evidence="7">In the central section; belongs to the HPPK family.</text>
</comment>
<comment type="similarity">
    <text evidence="7">In the C-terminal section; belongs to the DHPS family.</text>
</comment>
<evidence type="ECO:0000250" key="1">
    <source>
        <dbReference type="UniProtKB" id="P0AC13"/>
    </source>
</evidence>
<evidence type="ECO:0000250" key="2">
    <source>
        <dbReference type="UniProtKB" id="P53848"/>
    </source>
</evidence>
<evidence type="ECO:0000250" key="3">
    <source>
        <dbReference type="UniProtKB" id="P9WND1"/>
    </source>
</evidence>
<evidence type="ECO:0000255" key="4">
    <source>
        <dbReference type="PROSITE-ProRule" id="PRU00334"/>
    </source>
</evidence>
<evidence type="ECO:0000269" key="5">
    <source>
    </source>
</evidence>
<evidence type="ECO:0000269" key="6">
    <source>
    </source>
</evidence>
<evidence type="ECO:0000305" key="7"/>
<proteinExistence type="evidence at protein level"/>
<keyword id="KW-0067">ATP-binding</keyword>
<keyword id="KW-0963">Cytoplasm</keyword>
<keyword id="KW-0289">Folate biosynthesis</keyword>
<keyword id="KW-0418">Kinase</keyword>
<keyword id="KW-0456">Lyase</keyword>
<keyword id="KW-0460">Magnesium</keyword>
<keyword id="KW-0479">Metal-binding</keyword>
<keyword id="KW-0511">Multifunctional enzyme</keyword>
<keyword id="KW-0547">Nucleotide-binding</keyword>
<keyword id="KW-0597">Phosphoprotein</keyword>
<keyword id="KW-1185">Reference proteome</keyword>
<keyword id="KW-0808">Transferase</keyword>
<dbReference type="EC" id="4.1.2.25"/>
<dbReference type="EC" id="2.7.6.3"/>
<dbReference type="EC" id="2.5.1.15"/>
<dbReference type="EMBL" id="CU329671">
    <property type="protein sequence ID" value="CAA21289.2"/>
    <property type="molecule type" value="Genomic_DNA"/>
</dbReference>
<dbReference type="PIR" id="T39650">
    <property type="entry name" value="T39650"/>
</dbReference>
<dbReference type="RefSeq" id="NP_595420.2">
    <property type="nucleotide sequence ID" value="NM_001021327.2"/>
</dbReference>
<dbReference type="SMR" id="Q4LB35"/>
<dbReference type="BioGRID" id="276399">
    <property type="interactions" value="3"/>
</dbReference>
<dbReference type="FunCoup" id="Q4LB35">
    <property type="interactions" value="243"/>
</dbReference>
<dbReference type="STRING" id="284812.Q4LB35"/>
<dbReference type="iPTMnet" id="Q4LB35"/>
<dbReference type="PaxDb" id="4896-SPBC1734.03.1"/>
<dbReference type="EnsemblFungi" id="SPBC1734.03.1">
    <property type="protein sequence ID" value="SPBC1734.03.1:pep"/>
    <property type="gene ID" value="SPBC1734.03"/>
</dbReference>
<dbReference type="GeneID" id="2539851"/>
<dbReference type="KEGG" id="spo:2539851"/>
<dbReference type="PomBase" id="SPBC1734.03">
    <property type="gene designation" value="fol1"/>
</dbReference>
<dbReference type="VEuPathDB" id="FungiDB:SPBC1734.03"/>
<dbReference type="eggNOG" id="KOG2544">
    <property type="taxonomic scope" value="Eukaryota"/>
</dbReference>
<dbReference type="HOGENOM" id="CLU_008023_2_0_1"/>
<dbReference type="InParanoid" id="Q4LB35"/>
<dbReference type="OMA" id="ESEPMYF"/>
<dbReference type="UniPathway" id="UPA00077">
    <property type="reaction ID" value="UER00154"/>
</dbReference>
<dbReference type="UniPathway" id="UPA00077">
    <property type="reaction ID" value="UER00155"/>
</dbReference>
<dbReference type="UniPathway" id="UPA00077">
    <property type="reaction ID" value="UER00156"/>
</dbReference>
<dbReference type="PRO" id="PR:Q4LB35"/>
<dbReference type="Proteomes" id="UP000002485">
    <property type="component" value="Chromosome II"/>
</dbReference>
<dbReference type="GO" id="GO:0005737">
    <property type="term" value="C:cytoplasm"/>
    <property type="evidence" value="ECO:0007005"/>
    <property type="project" value="PomBase"/>
</dbReference>
<dbReference type="GO" id="GO:0005829">
    <property type="term" value="C:cytosol"/>
    <property type="evidence" value="ECO:0007005"/>
    <property type="project" value="PomBase"/>
</dbReference>
<dbReference type="GO" id="GO:0005740">
    <property type="term" value="C:mitochondrial envelope"/>
    <property type="evidence" value="ECO:0000318"/>
    <property type="project" value="GO_Central"/>
</dbReference>
<dbReference type="GO" id="GO:0003848">
    <property type="term" value="F:2-amino-4-hydroxy-6-hydroxymethyldihydropteridine diphosphokinase activity"/>
    <property type="evidence" value="ECO:0000250"/>
    <property type="project" value="PomBase"/>
</dbReference>
<dbReference type="GO" id="GO:0005524">
    <property type="term" value="F:ATP binding"/>
    <property type="evidence" value="ECO:0007669"/>
    <property type="project" value="UniProtKB-KW"/>
</dbReference>
<dbReference type="GO" id="GO:0004150">
    <property type="term" value="F:dihydroneopterin aldolase activity"/>
    <property type="evidence" value="ECO:0000250"/>
    <property type="project" value="PomBase"/>
</dbReference>
<dbReference type="GO" id="GO:0004156">
    <property type="term" value="F:dihydropteroate synthase activity"/>
    <property type="evidence" value="ECO:0000318"/>
    <property type="project" value="GO_Central"/>
</dbReference>
<dbReference type="GO" id="GO:0016301">
    <property type="term" value="F:kinase activity"/>
    <property type="evidence" value="ECO:0007669"/>
    <property type="project" value="UniProtKB-KW"/>
</dbReference>
<dbReference type="GO" id="GO:0046872">
    <property type="term" value="F:metal ion binding"/>
    <property type="evidence" value="ECO:0007669"/>
    <property type="project" value="UniProtKB-KW"/>
</dbReference>
<dbReference type="GO" id="GO:0046656">
    <property type="term" value="P:folic acid biosynthetic process"/>
    <property type="evidence" value="ECO:0000250"/>
    <property type="project" value="PomBase"/>
</dbReference>
<dbReference type="GO" id="GO:0046654">
    <property type="term" value="P:tetrahydrofolate biosynthetic process"/>
    <property type="evidence" value="ECO:0000318"/>
    <property type="project" value="GO_Central"/>
</dbReference>
<dbReference type="CDD" id="cd00534">
    <property type="entry name" value="DHNA_DHNTPE"/>
    <property type="match status" value="2"/>
</dbReference>
<dbReference type="CDD" id="cd00739">
    <property type="entry name" value="DHPS"/>
    <property type="match status" value="1"/>
</dbReference>
<dbReference type="CDD" id="cd00483">
    <property type="entry name" value="HPPK"/>
    <property type="match status" value="1"/>
</dbReference>
<dbReference type="FunFam" id="3.20.20.20:FF:000006">
    <property type="entry name" value="Dihydropteroate synthase"/>
    <property type="match status" value="1"/>
</dbReference>
<dbReference type="Gene3D" id="3.30.1130.10">
    <property type="match status" value="2"/>
</dbReference>
<dbReference type="Gene3D" id="3.30.70.560">
    <property type="entry name" value="7,8-Dihydro-6-hydroxymethylpterin-pyrophosphokinase HPPK"/>
    <property type="match status" value="1"/>
</dbReference>
<dbReference type="Gene3D" id="3.20.20.20">
    <property type="entry name" value="Dihydropteroate synthase-like"/>
    <property type="match status" value="1"/>
</dbReference>
<dbReference type="InterPro" id="IPR045031">
    <property type="entry name" value="DHP_synth-like"/>
</dbReference>
<dbReference type="InterPro" id="IPR006390">
    <property type="entry name" value="DHP_synth_dom"/>
</dbReference>
<dbReference type="InterPro" id="IPR011005">
    <property type="entry name" value="Dihydropteroate_synth-like_sf"/>
</dbReference>
<dbReference type="InterPro" id="IPR006157">
    <property type="entry name" value="FolB_dom"/>
</dbReference>
<dbReference type="InterPro" id="IPR016261">
    <property type="entry name" value="Folic_acid_synth"/>
</dbReference>
<dbReference type="InterPro" id="IPR043133">
    <property type="entry name" value="GTP-CH-I_C/QueF"/>
</dbReference>
<dbReference type="InterPro" id="IPR000550">
    <property type="entry name" value="Hppk"/>
</dbReference>
<dbReference type="InterPro" id="IPR035907">
    <property type="entry name" value="Hppk_sf"/>
</dbReference>
<dbReference type="InterPro" id="IPR000489">
    <property type="entry name" value="Pterin-binding_dom"/>
</dbReference>
<dbReference type="NCBIfam" id="TIGR01496">
    <property type="entry name" value="DHPS"/>
    <property type="match status" value="1"/>
</dbReference>
<dbReference type="NCBIfam" id="TIGR01498">
    <property type="entry name" value="folK"/>
    <property type="match status" value="1"/>
</dbReference>
<dbReference type="PANTHER" id="PTHR20941">
    <property type="entry name" value="FOLATE SYNTHESIS PROTEINS"/>
    <property type="match status" value="1"/>
</dbReference>
<dbReference type="PANTHER" id="PTHR20941:SF1">
    <property type="entry name" value="FOLIC ACID SYNTHESIS PROTEIN FOL1"/>
    <property type="match status" value="1"/>
</dbReference>
<dbReference type="Pfam" id="PF02152">
    <property type="entry name" value="FolB"/>
    <property type="match status" value="2"/>
</dbReference>
<dbReference type="Pfam" id="PF01288">
    <property type="entry name" value="HPPK"/>
    <property type="match status" value="1"/>
</dbReference>
<dbReference type="Pfam" id="PF00809">
    <property type="entry name" value="Pterin_bind"/>
    <property type="match status" value="1"/>
</dbReference>
<dbReference type="PIRSF" id="PIRSF000741">
    <property type="entry name" value="Folic_acid_synth"/>
    <property type="match status" value="1"/>
</dbReference>
<dbReference type="SMART" id="SM00905">
    <property type="entry name" value="FolB"/>
    <property type="match status" value="2"/>
</dbReference>
<dbReference type="SUPFAM" id="SSF55083">
    <property type="entry name" value="6-hydroxymethyl-7,8-dihydropterin pyrophosphokinase, HPPK"/>
    <property type="match status" value="1"/>
</dbReference>
<dbReference type="SUPFAM" id="SSF51717">
    <property type="entry name" value="Dihydropteroate synthetase-like"/>
    <property type="match status" value="1"/>
</dbReference>
<dbReference type="SUPFAM" id="SSF55620">
    <property type="entry name" value="Tetrahydrobiopterin biosynthesis enzymes-like"/>
    <property type="match status" value="2"/>
</dbReference>
<dbReference type="PROSITE" id="PS00793">
    <property type="entry name" value="DHPS_2"/>
    <property type="match status" value="1"/>
</dbReference>
<dbReference type="PROSITE" id="PS50972">
    <property type="entry name" value="PTERIN_BINDING"/>
    <property type="match status" value="1"/>
</dbReference>
<gene>
    <name type="primary">fol1</name>
    <name type="ORF">SPBC1734.03</name>
    <name type="ORF">SPBC337.19</name>
</gene>
<feature type="chain" id="PRO_0000343164" description="Folic acid synthesis protein fol1">
    <location>
        <begin position="1"/>
        <end position="733"/>
    </location>
</feature>
<feature type="domain" description="Pterin-binding" evidence="4">
    <location>
        <begin position="465"/>
        <end position="724"/>
    </location>
</feature>
<feature type="region of interest" description="DHNA 1">
    <location>
        <begin position="55"/>
        <end position="167"/>
    </location>
</feature>
<feature type="region of interest" description="DHNA 2">
    <location>
        <begin position="179"/>
        <end position="277"/>
    </location>
</feature>
<feature type="region of interest" description="HPK">
    <location>
        <begin position="295"/>
        <end position="454"/>
    </location>
</feature>
<feature type="region of interest" description="DHPS">
    <location>
        <begin position="467"/>
        <end position="733"/>
    </location>
</feature>
<feature type="binding site" evidence="3">
    <location>
        <position position="472"/>
    </location>
    <ligand>
        <name>Mg(2+)</name>
        <dbReference type="ChEBI" id="CHEBI:18420"/>
    </ligand>
</feature>
<feature type="binding site" evidence="1">
    <location>
        <position position="511"/>
    </location>
    <ligand>
        <name>(7,8-dihydropterin-6-yl)methyl diphosphate</name>
        <dbReference type="ChEBI" id="CHEBI:72950"/>
    </ligand>
</feature>
<feature type="binding site" evidence="1">
    <location>
        <position position="546"/>
    </location>
    <ligand>
        <name>(7,8-dihydropterin-6-yl)methyl diphosphate</name>
        <dbReference type="ChEBI" id="CHEBI:72950"/>
    </ligand>
</feature>
<feature type="binding site" evidence="1">
    <location>
        <position position="565"/>
    </location>
    <ligand>
        <name>(7,8-dihydropterin-6-yl)methyl diphosphate</name>
        <dbReference type="ChEBI" id="CHEBI:72950"/>
    </ligand>
</feature>
<feature type="binding site" evidence="1">
    <location>
        <position position="637"/>
    </location>
    <ligand>
        <name>(7,8-dihydropterin-6-yl)methyl diphosphate</name>
        <dbReference type="ChEBI" id="CHEBI:72950"/>
    </ligand>
</feature>
<feature type="binding site" evidence="1">
    <location>
        <position position="677"/>
    </location>
    <ligand>
        <name>(7,8-dihydropterin-6-yl)methyl diphosphate</name>
        <dbReference type="ChEBI" id="CHEBI:72950"/>
    </ligand>
</feature>
<feature type="binding site" evidence="1">
    <location>
        <begin position="712"/>
        <end position="714"/>
    </location>
    <ligand>
        <name>(7,8-dihydropterin-6-yl)methyl diphosphate</name>
        <dbReference type="ChEBI" id="CHEBI:72950"/>
    </ligand>
</feature>
<feature type="modified residue" description="Phosphotyrosine" evidence="6">
    <location>
        <position position="281"/>
    </location>
</feature>